<organism>
    <name type="scientific">Saccharomyces cerevisiae (strain ATCC 204508 / S288c)</name>
    <name type="common">Baker's yeast</name>
    <dbReference type="NCBI Taxonomy" id="559292"/>
    <lineage>
        <taxon>Eukaryota</taxon>
        <taxon>Fungi</taxon>
        <taxon>Dikarya</taxon>
        <taxon>Ascomycota</taxon>
        <taxon>Saccharomycotina</taxon>
        <taxon>Saccharomycetes</taxon>
        <taxon>Saccharomycetales</taxon>
        <taxon>Saccharomycetaceae</taxon>
        <taxon>Saccharomyces</taxon>
    </lineage>
</organism>
<evidence type="ECO:0000255" key="1">
    <source>
        <dbReference type="PROSITE-ProRule" id="PRU00159"/>
    </source>
</evidence>
<evidence type="ECO:0000255" key="2">
    <source>
        <dbReference type="PROSITE-ProRule" id="PRU00618"/>
    </source>
</evidence>
<evidence type="ECO:0000255" key="3">
    <source>
        <dbReference type="PROSITE-ProRule" id="PRU10027"/>
    </source>
</evidence>
<evidence type="ECO:0000256" key="4">
    <source>
        <dbReference type="SAM" id="MobiDB-lite"/>
    </source>
</evidence>
<evidence type="ECO:0000269" key="5">
    <source>
    </source>
</evidence>
<evidence type="ECO:0000269" key="6">
    <source>
    </source>
</evidence>
<evidence type="ECO:0000269" key="7">
    <source>
    </source>
</evidence>
<evidence type="ECO:0000269" key="8">
    <source>
    </source>
</evidence>
<evidence type="ECO:0000269" key="9">
    <source>
    </source>
</evidence>
<evidence type="ECO:0000269" key="10">
    <source>
    </source>
</evidence>
<evidence type="ECO:0000269" key="11">
    <source>
    </source>
</evidence>
<evidence type="ECO:0000269" key="12">
    <source>
    </source>
</evidence>
<evidence type="ECO:0000269" key="13">
    <source>
    </source>
</evidence>
<evidence type="ECO:0000269" key="14">
    <source>
    </source>
</evidence>
<evidence type="ECO:0000269" key="15">
    <source>
    </source>
</evidence>
<evidence type="ECO:0000269" key="16">
    <source>
    </source>
</evidence>
<evidence type="ECO:0000269" key="17">
    <source>
    </source>
</evidence>
<evidence type="ECO:0000305" key="18"/>
<evidence type="ECO:0007744" key="19">
    <source>
    </source>
</evidence>
<evidence type="ECO:0007744" key="20">
    <source>
    </source>
</evidence>
<evidence type="ECO:0007744" key="21">
    <source>
    </source>
</evidence>
<proteinExistence type="evidence at protein level"/>
<name>YPK1_YEAST</name>
<dbReference type="EC" id="2.7.11.1"/>
<dbReference type="EMBL" id="M21307">
    <property type="protein sequence ID" value="AAA34880.1"/>
    <property type="molecule type" value="Genomic_DNA"/>
</dbReference>
<dbReference type="EMBL" id="Z28126">
    <property type="protein sequence ID" value="CAA81967.1"/>
    <property type="molecule type" value="Genomic_DNA"/>
</dbReference>
<dbReference type="EMBL" id="BK006944">
    <property type="protein sequence ID" value="DAA09035.1"/>
    <property type="molecule type" value="Genomic_DNA"/>
</dbReference>
<dbReference type="PIR" id="S37955">
    <property type="entry name" value="S37955"/>
</dbReference>
<dbReference type="RefSeq" id="NP_012796.1">
    <property type="nucleotide sequence ID" value="NM_001179692.1"/>
</dbReference>
<dbReference type="SMR" id="P12688"/>
<dbReference type="BioGRID" id="34010">
    <property type="interactions" value="183"/>
</dbReference>
<dbReference type="DIP" id="DIP-4869N"/>
<dbReference type="FunCoup" id="P12688">
    <property type="interactions" value="268"/>
</dbReference>
<dbReference type="IntAct" id="P12688">
    <property type="interactions" value="28"/>
</dbReference>
<dbReference type="MINT" id="P12688"/>
<dbReference type="STRING" id="4932.YKL126W"/>
<dbReference type="iPTMnet" id="P12688"/>
<dbReference type="PaxDb" id="4932-YKL126W"/>
<dbReference type="PeptideAtlas" id="P12688"/>
<dbReference type="EnsemblFungi" id="YKL126W_mRNA">
    <property type="protein sequence ID" value="YKL126W"/>
    <property type="gene ID" value="YKL126W"/>
</dbReference>
<dbReference type="GeneID" id="853733"/>
<dbReference type="KEGG" id="sce:YKL126W"/>
<dbReference type="AGR" id="SGD:S000001609"/>
<dbReference type="SGD" id="S000001609">
    <property type="gene designation" value="YPK1"/>
</dbReference>
<dbReference type="VEuPathDB" id="FungiDB:YKL126W"/>
<dbReference type="eggNOG" id="KOG0598">
    <property type="taxonomic scope" value="Eukaryota"/>
</dbReference>
<dbReference type="GeneTree" id="ENSGT00940000175269"/>
<dbReference type="HOGENOM" id="CLU_000288_120_2_1"/>
<dbReference type="InParanoid" id="P12688"/>
<dbReference type="OMA" id="SWKRLLM"/>
<dbReference type="OrthoDB" id="63267at2759"/>
<dbReference type="BioCyc" id="YEAST:G3O-31908-MONOMER"/>
<dbReference type="BRENDA" id="2.7.11.1">
    <property type="organism ID" value="984"/>
</dbReference>
<dbReference type="Reactome" id="R-SCE-1257604">
    <property type="pathway name" value="PIP3 activates AKT signaling"/>
</dbReference>
<dbReference type="Reactome" id="R-SCE-1474151">
    <property type="pathway name" value="Tetrahydrobiopterin (BH4) synthesis, recycling, salvage and regulation"/>
</dbReference>
<dbReference type="Reactome" id="R-SCE-165158">
    <property type="pathway name" value="Activation of AKT2"/>
</dbReference>
<dbReference type="Reactome" id="R-SCE-198693">
    <property type="pathway name" value="AKT phosphorylates targets in the nucleus"/>
</dbReference>
<dbReference type="Reactome" id="R-SCE-203615">
    <property type="pathway name" value="eNOS activation"/>
</dbReference>
<dbReference type="Reactome" id="R-SCE-389357">
    <property type="pathway name" value="CD28 dependent PI3K/Akt signaling"/>
</dbReference>
<dbReference type="Reactome" id="R-SCE-389513">
    <property type="pathway name" value="Co-inhibition by CTLA4"/>
</dbReference>
<dbReference type="Reactome" id="R-SCE-392451">
    <property type="pathway name" value="G beta:gamma signalling through PI3Kgamma"/>
</dbReference>
<dbReference type="Reactome" id="R-SCE-450385">
    <property type="pathway name" value="Butyrate Response Factor 1 (BRF1) binds and destabilizes mRNA"/>
</dbReference>
<dbReference type="Reactome" id="R-SCE-5218920">
    <property type="pathway name" value="VEGFR2 mediated vascular permeability"/>
</dbReference>
<dbReference type="Reactome" id="R-SCE-6804757">
    <property type="pathway name" value="Regulation of TP53 Degradation"/>
</dbReference>
<dbReference type="Reactome" id="R-SCE-6811558">
    <property type="pathway name" value="PI5P, PP2A and IER3 Regulate PI3K/AKT Signaling"/>
</dbReference>
<dbReference type="Reactome" id="R-SCE-9009391">
    <property type="pathway name" value="Extra-nuclear estrogen signaling"/>
</dbReference>
<dbReference type="Reactome" id="R-SCE-9031628">
    <property type="pathway name" value="NGF-stimulated transcription"/>
</dbReference>
<dbReference type="Reactome" id="R-SCE-9841251">
    <property type="pathway name" value="Mitochondrial unfolded protein response (UPRmt)"/>
</dbReference>
<dbReference type="Reactome" id="R-SCE-9856530">
    <property type="pathway name" value="High laminar flow shear stress activates signaling by PIEZO1 and PECAM1:CDH5:KDR in endothelial cells"/>
</dbReference>
<dbReference type="BioGRID-ORCS" id="853733">
    <property type="hits" value="3 hits in 13 CRISPR screens"/>
</dbReference>
<dbReference type="PRO" id="PR:P12688"/>
<dbReference type="Proteomes" id="UP000002311">
    <property type="component" value="Chromosome XI"/>
</dbReference>
<dbReference type="RNAct" id="P12688">
    <property type="molecule type" value="protein"/>
</dbReference>
<dbReference type="GO" id="GO:0005935">
    <property type="term" value="C:cellular bud neck"/>
    <property type="evidence" value="ECO:0000314"/>
    <property type="project" value="SGD"/>
</dbReference>
<dbReference type="GO" id="GO:0005829">
    <property type="term" value="C:cytosol"/>
    <property type="evidence" value="ECO:0000314"/>
    <property type="project" value="SGD"/>
</dbReference>
<dbReference type="GO" id="GO:0005886">
    <property type="term" value="C:plasma membrane"/>
    <property type="evidence" value="ECO:0000314"/>
    <property type="project" value="SGD"/>
</dbReference>
<dbReference type="GO" id="GO:0005524">
    <property type="term" value="F:ATP binding"/>
    <property type="evidence" value="ECO:0007669"/>
    <property type="project" value="UniProtKB-KW"/>
</dbReference>
<dbReference type="GO" id="GO:0019887">
    <property type="term" value="F:protein kinase regulator activity"/>
    <property type="evidence" value="ECO:0000315"/>
    <property type="project" value="CACAO"/>
</dbReference>
<dbReference type="GO" id="GO:0106310">
    <property type="term" value="F:protein serine kinase activity"/>
    <property type="evidence" value="ECO:0007669"/>
    <property type="project" value="RHEA"/>
</dbReference>
<dbReference type="GO" id="GO:0004674">
    <property type="term" value="F:protein serine/threonine kinase activity"/>
    <property type="evidence" value="ECO:0000314"/>
    <property type="project" value="SGD"/>
</dbReference>
<dbReference type="GO" id="GO:0071555">
    <property type="term" value="P:cell wall organization"/>
    <property type="evidence" value="ECO:0007669"/>
    <property type="project" value="UniProtKB-KW"/>
</dbReference>
<dbReference type="GO" id="GO:0071311">
    <property type="term" value="P:cellular response to acetate"/>
    <property type="evidence" value="ECO:0000315"/>
    <property type="project" value="SGD"/>
</dbReference>
<dbReference type="GO" id="GO:0070941">
    <property type="term" value="P:eisosome assembly"/>
    <property type="evidence" value="ECO:0000316"/>
    <property type="project" value="SGD"/>
</dbReference>
<dbReference type="GO" id="GO:0006897">
    <property type="term" value="P:endocytosis"/>
    <property type="evidence" value="ECO:0007669"/>
    <property type="project" value="UniProtKB-KW"/>
</dbReference>
<dbReference type="GO" id="GO:0006650">
    <property type="term" value="P:glycerophospholipid metabolic process"/>
    <property type="evidence" value="ECO:0000315"/>
    <property type="project" value="SGD"/>
</dbReference>
<dbReference type="GO" id="GO:0035556">
    <property type="term" value="P:intracellular signal transduction"/>
    <property type="evidence" value="ECO:0000318"/>
    <property type="project" value="GO_Central"/>
</dbReference>
<dbReference type="GO" id="GO:0061093">
    <property type="term" value="P:negative regulation of phospholipid translocation"/>
    <property type="evidence" value="ECO:0000315"/>
    <property type="project" value="SGD"/>
</dbReference>
<dbReference type="GO" id="GO:0090155">
    <property type="term" value="P:negative regulation of sphingolipid biosynthetic process"/>
    <property type="evidence" value="ECO:0000315"/>
    <property type="project" value="SGD"/>
</dbReference>
<dbReference type="GO" id="GO:0060237">
    <property type="term" value="P:regulation of fungal-type cell wall organization"/>
    <property type="evidence" value="ECO:0000315"/>
    <property type="project" value="SGD"/>
</dbReference>
<dbReference type="CDD" id="cd11651">
    <property type="entry name" value="YPK1_N_like"/>
    <property type="match status" value="1"/>
</dbReference>
<dbReference type="FunFam" id="1.10.510.10:FF:000008">
    <property type="entry name" value="Non-specific serine/threonine protein kinase"/>
    <property type="match status" value="1"/>
</dbReference>
<dbReference type="FunFam" id="3.30.200.20:FF:000048">
    <property type="entry name" value="Non-specific serine/threonine protein kinase"/>
    <property type="match status" value="1"/>
</dbReference>
<dbReference type="Gene3D" id="3.30.200.20">
    <property type="entry name" value="Phosphorylase Kinase, domain 1"/>
    <property type="match status" value="1"/>
</dbReference>
<dbReference type="Gene3D" id="1.10.510.10">
    <property type="entry name" value="Transferase(Phosphotransferase) domain 1"/>
    <property type="match status" value="1"/>
</dbReference>
<dbReference type="InterPro" id="IPR000961">
    <property type="entry name" value="AGC-kinase_C"/>
</dbReference>
<dbReference type="InterPro" id="IPR011009">
    <property type="entry name" value="Kinase-like_dom_sf"/>
</dbReference>
<dbReference type="InterPro" id="IPR017892">
    <property type="entry name" value="Pkinase_C"/>
</dbReference>
<dbReference type="InterPro" id="IPR000719">
    <property type="entry name" value="Prot_kinase_dom"/>
</dbReference>
<dbReference type="InterPro" id="IPR017441">
    <property type="entry name" value="Protein_kinase_ATP_BS"/>
</dbReference>
<dbReference type="InterPro" id="IPR008271">
    <property type="entry name" value="Ser/Thr_kinase_AS"/>
</dbReference>
<dbReference type="PANTHER" id="PTHR24351">
    <property type="entry name" value="RIBOSOMAL PROTEIN S6 KINASE"/>
    <property type="match status" value="1"/>
</dbReference>
<dbReference type="Pfam" id="PF00069">
    <property type="entry name" value="Pkinase"/>
    <property type="match status" value="1"/>
</dbReference>
<dbReference type="Pfam" id="PF00433">
    <property type="entry name" value="Pkinase_C"/>
    <property type="match status" value="1"/>
</dbReference>
<dbReference type="SMART" id="SM00133">
    <property type="entry name" value="S_TK_X"/>
    <property type="match status" value="1"/>
</dbReference>
<dbReference type="SMART" id="SM00220">
    <property type="entry name" value="S_TKc"/>
    <property type="match status" value="1"/>
</dbReference>
<dbReference type="SUPFAM" id="SSF56112">
    <property type="entry name" value="Protein kinase-like (PK-like)"/>
    <property type="match status" value="1"/>
</dbReference>
<dbReference type="PROSITE" id="PS51285">
    <property type="entry name" value="AGC_KINASE_CTER"/>
    <property type="match status" value="1"/>
</dbReference>
<dbReference type="PROSITE" id="PS00107">
    <property type="entry name" value="PROTEIN_KINASE_ATP"/>
    <property type="match status" value="1"/>
</dbReference>
<dbReference type="PROSITE" id="PS50011">
    <property type="entry name" value="PROTEIN_KINASE_DOM"/>
    <property type="match status" value="1"/>
</dbReference>
<dbReference type="PROSITE" id="PS00108">
    <property type="entry name" value="PROTEIN_KINASE_ST"/>
    <property type="match status" value="1"/>
</dbReference>
<protein>
    <recommendedName>
        <fullName>Serine/threonine-protein kinase YPK1</fullName>
        <ecNumber>2.7.11.1</ecNumber>
    </recommendedName>
    <alternativeName>
        <fullName>Sphingosine-like immunosuppressant resistant protein 2</fullName>
    </alternativeName>
    <alternativeName>
        <fullName>Yeast protein kinase 1</fullName>
    </alternativeName>
</protein>
<accession>P12688</accession>
<accession>D6VX69</accession>
<feature type="chain" id="PRO_0000086835" description="Serine/threonine-protein kinase YPK1">
    <location>
        <begin position="1"/>
        <end position="680"/>
    </location>
</feature>
<feature type="domain" description="Protein kinase" evidence="1">
    <location>
        <begin position="347"/>
        <end position="602"/>
    </location>
</feature>
<feature type="domain" description="AGC-kinase C-terminal" evidence="2">
    <location>
        <begin position="603"/>
        <end position="673"/>
    </location>
</feature>
<feature type="region of interest" description="Disordered" evidence="4">
    <location>
        <begin position="1"/>
        <end position="117"/>
    </location>
</feature>
<feature type="compositionally biased region" description="Basic residues" evidence="4">
    <location>
        <begin position="1"/>
        <end position="11"/>
    </location>
</feature>
<feature type="compositionally biased region" description="Basic and acidic residues" evidence="4">
    <location>
        <begin position="12"/>
        <end position="21"/>
    </location>
</feature>
<feature type="compositionally biased region" description="Basic and acidic residues" evidence="4">
    <location>
        <begin position="41"/>
        <end position="56"/>
    </location>
</feature>
<feature type="compositionally biased region" description="Low complexity" evidence="4">
    <location>
        <begin position="59"/>
        <end position="71"/>
    </location>
</feature>
<feature type="compositionally biased region" description="Polar residues" evidence="4">
    <location>
        <begin position="73"/>
        <end position="83"/>
    </location>
</feature>
<feature type="compositionally biased region" description="Low complexity" evidence="4">
    <location>
        <begin position="84"/>
        <end position="97"/>
    </location>
</feature>
<feature type="compositionally biased region" description="Polar residues" evidence="4">
    <location>
        <begin position="98"/>
        <end position="117"/>
    </location>
</feature>
<feature type="active site" description="Proton acceptor" evidence="1 3">
    <location>
        <position position="470"/>
    </location>
</feature>
<feature type="binding site" evidence="1">
    <location>
        <begin position="353"/>
        <end position="361"/>
    </location>
    <ligand>
        <name>ATP</name>
        <dbReference type="ChEBI" id="CHEBI:30616"/>
    </ligand>
</feature>
<feature type="binding site" evidence="1">
    <location>
        <position position="376"/>
    </location>
    <ligand>
        <name>ATP</name>
        <dbReference type="ChEBI" id="CHEBI:30616"/>
    </ligand>
</feature>
<feature type="modified residue" description="Phosphothreonine" evidence="19 21">
    <location>
        <position position="57"/>
    </location>
</feature>
<feature type="modified residue" description="Phosphoserine" evidence="21">
    <location>
        <position position="61"/>
    </location>
</feature>
<feature type="modified residue" description="Phosphoserine" evidence="21">
    <location>
        <position position="64"/>
    </location>
</feature>
<feature type="modified residue" description="Phosphoserine" evidence="21">
    <location>
        <position position="71"/>
    </location>
</feature>
<feature type="modified residue" description="Phosphoserine" evidence="20 21">
    <location>
        <position position="170"/>
    </location>
</feature>
<feature type="modified residue" description="Phosphothreonine" evidence="21">
    <location>
        <position position="502"/>
    </location>
</feature>
<feature type="modified residue" description="Phosphothreonine; by PKH1" evidence="5 13 16 21">
    <location>
        <position position="504"/>
    </location>
</feature>
<feature type="modified residue" description="Phosphoserine" evidence="19 21">
    <location>
        <position position="644"/>
    </location>
</feature>
<feature type="modified residue" description="Phosphoserine" evidence="19 20 21">
    <location>
        <position position="653"/>
    </location>
</feature>
<feature type="modified residue" description="Phosphothreonine; by PKH1" evidence="13 15 16">
    <location>
        <position position="662"/>
    </location>
</feature>
<feature type="modified residue" description="Phosphoserine" evidence="21">
    <location>
        <position position="671"/>
    </location>
</feature>
<feature type="mutagenesis site" description="Does not rescue the defects of the ORM1 and ORM2 double knockout mutant background including defects in LAC1 phosphorylation, endocytosis, and actin patches distribution." evidence="16">
    <original>D</original>
    <variation>A</variation>
    <location>
        <position position="242"/>
    </location>
</feature>
<feature type="mutagenesis site" description="No kinase activity. ATP-binding defect. Internalization defects." evidence="6 7 8 11 12 13">
    <original>K</original>
    <variation>A</variation>
    <variation>R</variation>
    <location>
        <position position="376"/>
    </location>
</feature>
<feature type="mutagenesis site" description="Catalytically inactive. Internalization defects." evidence="7 11">
    <original>D</original>
    <variation>A</variation>
    <location>
        <position position="488"/>
    </location>
</feature>
<feature type="mutagenesis site" description="Reduced sphingolipid biosynthesis inhibitor drug myriocin (ISP-1) resistance. Defective in growth and endocytosis." evidence="7 12">
    <original>G</original>
    <variation>R</variation>
    <location>
        <position position="490"/>
    </location>
</feature>
<feature type="mutagenesis site" description="Reduced sphingolipid biosynthesis inhibitor drug myriocin (ISP-1) resistance. Defective in growth and endocytosis." evidence="7 11 12 13">
    <original>T</original>
    <variation>A</variation>
    <variation>D</variation>
    <variation>E</variation>
    <location>
        <position position="504"/>
    </location>
</feature>
<feature type="mutagenesis site" description="No phosphorylation; when associated with A-662 or D-662." evidence="7 11 12 13">
    <original>T</original>
    <variation>A</variation>
    <variation>D</variation>
    <location>
        <position position="504"/>
    </location>
</feature>
<feature type="mutagenesis site" description="No phosphorylation; when associated with A-504 or D-504." evidence="7 11 12 13">
    <original>T</original>
    <variation>A</variation>
    <variation>D</variation>
    <location>
        <position position="662"/>
    </location>
</feature>
<feature type="mutagenesis site" description="No phosphorylation. Reduced sphingolipid biosynthesis inhibitor drug myriocin (ISP-1) resistance. No defect in growth or endocytosis." evidence="7 11 12 13">
    <original>T</original>
    <variation>A</variation>
    <location>
        <position position="662"/>
    </location>
</feature>
<feature type="sequence conflict" description="In Ref. 2; AAA34880." evidence="18" ref="2">
    <original>P</original>
    <variation>L</variation>
    <location>
        <position position="201"/>
    </location>
</feature>
<feature type="sequence conflict" description="In Ref. 2; AAA34880." evidence="18" ref="2">
    <original>M</original>
    <variation>I</variation>
    <location>
        <position position="553"/>
    </location>
</feature>
<gene>
    <name type="primary">YPK1</name>
    <name type="synonym">SLI2</name>
    <name type="ordered locus">YKL126W</name>
</gene>
<keyword id="KW-0067">ATP-binding</keyword>
<keyword id="KW-1003">Cell membrane</keyword>
<keyword id="KW-0961">Cell wall biogenesis/degradation</keyword>
<keyword id="KW-0963">Cytoplasm</keyword>
<keyword id="KW-0254">Endocytosis</keyword>
<keyword id="KW-0418">Kinase</keyword>
<keyword id="KW-0443">Lipid metabolism</keyword>
<keyword id="KW-0472">Membrane</keyword>
<keyword id="KW-0547">Nucleotide-binding</keyword>
<keyword id="KW-0597">Phosphoprotein</keyword>
<keyword id="KW-1185">Reference proteome</keyword>
<keyword id="KW-0723">Serine/threonine-protein kinase</keyword>
<keyword id="KW-0746">Sphingolipid metabolism</keyword>
<keyword id="KW-0808">Transferase</keyword>
<sequence>MYSWKSKFKFGKSKEEKEAKHSGFFHSSKKEEQQNNQATAGEHDASITRSSLDRKGTINPSNSSVVPVRVSYDASSSTSTVRDSNGGNSENTNSSQNLDETANIGSTGTPNDATSSSGMMTIKVYNGDDFILPFPITSSEQILNKLLASGVPPPHKEISKEVDALIAQLSRVQIKNQGPADEDLISSESAAKFIPSTIMLPGSSTLNPLLYFTIEFDNTVATIEAEYGTIAKPGFNKISTFDVTRKLPYLKIDVFARIPSILLPSKTWQQEMGLQDEKLQTIFDKINSNQDIHLDSFHLPINLSFDSAASIRLYNHHWITLDNGLGKINISIDYKPSRNKPLSIDDFDLLKVIGKGSFGKVMQVRKKDTQKVYALKAIRKSYIVSKSEVTHTLAERTVLARVDCPFIVPLKFSFQSPEKLYFVLAFINGGELFYHLQKEGRFDLSRARFYTAELLCALDNLHKLDVVYRDLKPENILLDYQGHIALCDFGLCKLNMKDDDKTDTFCGTPEYLAPELLLGLGYTKAVDWWTLGVLLYEMLTGLPPYYDEDVPKMYKKILQEPLVFPDGFDRDAKDLLIGLLSRDPTRRLGYNGADEIRNHPFFSQLSWKRLLMKGYIPPYKPAVSNSMDTSNFDEEFTREKPIDSVVDEYLSESVQKQFGGWTYVGNEQLGSSMVQGRSIR</sequence>
<comment type="function">
    <text evidence="6 8 11 14 15 16 17">Plays an essential role in the proliferation of yeast cells (PubMed:8437590). Involved in a signaling pathway, required for optimal cell wall integrity, that acts in parallel with the PKC1-SLT2-dependent pathway (PubMed:12221112). Downstream kinase in the sphingolipid-mediated signaling pathway (PubMed:10825204, PubMed:34492164, PubMed:39490931). Phosphorylation is regulated by the intracellular sphingolipid concentration (PubMed:34492164). Disruption or inhibition of sphingolipid synthesis leads to the activation and phosphorylation of YPK1 through the TORC2 and PKH1 pathways, which in turn phosphorylates ORM1 and LAG1 to activate sphingolipid synthesis (PubMed:34492164). Cooperates with SLI1 in mediating resistance to the sphingolipid biosynthesis inhibitor drug myriocin (ISP-1); kinase activity is essential for the resistance. Required for both receptor-mediated and fluid-phase endocytosis, but is not necessary for receptor phosphorylation or ubiquitination. Necessary for the internalization of plasma membrane proteins carrying different types of internalization signals. Acts downstream of the PKH kinases to control endocytosis by phosphorylating components of the endocytic machinery (PubMed:39490931). Phosphorylation of residue Thr-504 in the activation loop and residue Thr-662 are essential for activity (PubMed:39490931). Phosphorylates and down-regulates flippase activator FPK1 (PubMed:19966303).</text>
</comment>
<comment type="catalytic activity">
    <reaction>
        <text>L-seryl-[protein] + ATP = O-phospho-L-seryl-[protein] + ADP + H(+)</text>
        <dbReference type="Rhea" id="RHEA:17989"/>
        <dbReference type="Rhea" id="RHEA-COMP:9863"/>
        <dbReference type="Rhea" id="RHEA-COMP:11604"/>
        <dbReference type="ChEBI" id="CHEBI:15378"/>
        <dbReference type="ChEBI" id="CHEBI:29999"/>
        <dbReference type="ChEBI" id="CHEBI:30616"/>
        <dbReference type="ChEBI" id="CHEBI:83421"/>
        <dbReference type="ChEBI" id="CHEBI:456216"/>
        <dbReference type="EC" id="2.7.11.1"/>
    </reaction>
</comment>
<comment type="catalytic activity">
    <reaction>
        <text>L-threonyl-[protein] + ATP = O-phospho-L-threonyl-[protein] + ADP + H(+)</text>
        <dbReference type="Rhea" id="RHEA:46608"/>
        <dbReference type="Rhea" id="RHEA-COMP:11060"/>
        <dbReference type="Rhea" id="RHEA-COMP:11605"/>
        <dbReference type="ChEBI" id="CHEBI:15378"/>
        <dbReference type="ChEBI" id="CHEBI:30013"/>
        <dbReference type="ChEBI" id="CHEBI:30616"/>
        <dbReference type="ChEBI" id="CHEBI:61977"/>
        <dbReference type="ChEBI" id="CHEBI:456216"/>
        <dbReference type="EC" id="2.7.11.1"/>
    </reaction>
</comment>
<comment type="activity regulation">
    <text evidence="13">Activated by phytosphingosine (PHS), a sphingoid long chain base (PubMed:15840588). Activated by PKH1 phosphorylation (PubMed:15840588).</text>
</comment>
<comment type="interaction">
    <interactant intactId="EBI-29473">
        <id>P12688</id>
    </interactant>
    <interactant intactId="EBI-9813">
        <id>P53739</id>
        <label>FPK1</label>
    </interactant>
    <organismsDiffer>false</organismsDiffer>
    <experiments>2</experiments>
</comment>
<comment type="subcellular location">
    <subcellularLocation>
        <location evidence="6 8 9">Cytoplasm</location>
    </subcellularLocation>
    <subcellularLocation>
        <location evidence="18">Cell membrane</location>
        <topology evidence="18">Peripheral membrane protein</topology>
        <orientation evidence="18">Cytoplasmic side</orientation>
    </subcellularLocation>
    <text>Intracellular localization is regulated by the intracellular sphingolipid levels. During the yeast cell cycle, distributed both on the plasma membrane and in the cytosol. Greater accumulation was detected on the plasma membrane, such as in the budding area, a daughter cell and the neck region of the mother cell in the S phase, and the septum between a mother cell and a daughter cell in the G2 phase.</text>
</comment>
<comment type="PTM">
    <text evidence="5 11 13 14 15 16">Autophosphorylated (PubMed:34492164). Phytosphingosine level stimulates phosphorylation by PKH1 (PubMed:34492164). The N-terminal half is phosphorylated by FPK1. Phosphorylation is inhibited by exogenous addition of phytosphingosine (PubMed:39490931).</text>
</comment>
<comment type="miscellaneous">
    <text evidence="10">Present with 2950 molecules/cell in log phase SD medium.</text>
</comment>
<comment type="similarity">
    <text evidence="18">Belongs to the protein kinase superfamily. AGC Ser/Thr protein kinase family. RAC subfamily.</text>
</comment>
<reference key="1">
    <citation type="journal article" date="1988" name="DNA">
        <title>Isolation of a yeast protein kinase gene by screening with a mammalian protein kinase cDNA.</title>
        <authorList>
            <person name="Maurer R.A."/>
        </authorList>
    </citation>
    <scope>NUCLEOTIDE SEQUENCE [GENOMIC DNA]</scope>
</reference>
<reference key="2">
    <citation type="journal article" date="1994" name="Nature">
        <title>Complete DNA sequence of yeast chromosome XI.</title>
        <authorList>
            <person name="Dujon B."/>
            <person name="Alexandraki D."/>
            <person name="Andre B."/>
            <person name="Ansorge W."/>
            <person name="Baladron V."/>
            <person name="Ballesta J.P.G."/>
            <person name="Banrevi A."/>
            <person name="Bolle P.-A."/>
            <person name="Bolotin-Fukuhara M."/>
            <person name="Bossier P."/>
            <person name="Bou G."/>
            <person name="Boyer J."/>
            <person name="Buitrago M.J."/>
            <person name="Cheret G."/>
            <person name="Colleaux L."/>
            <person name="Daignan-Fornier B."/>
            <person name="del Rey F."/>
            <person name="Dion C."/>
            <person name="Domdey H."/>
            <person name="Duesterhoeft A."/>
            <person name="Duesterhus S."/>
            <person name="Entian K.-D."/>
            <person name="Erfle H."/>
            <person name="Esteban P.F."/>
            <person name="Feldmann H."/>
            <person name="Fernandes L."/>
            <person name="Fobo G.M."/>
            <person name="Fritz C."/>
            <person name="Fukuhara H."/>
            <person name="Gabel C."/>
            <person name="Gaillon L."/>
            <person name="Garcia-Cantalejo J.M."/>
            <person name="Garcia-Ramirez J.J."/>
            <person name="Gent M.E."/>
            <person name="Ghazvini M."/>
            <person name="Goffeau A."/>
            <person name="Gonzalez A."/>
            <person name="Grothues D."/>
            <person name="Guerreiro P."/>
            <person name="Hegemann J.H."/>
            <person name="Hewitt N."/>
            <person name="Hilger F."/>
            <person name="Hollenberg C.P."/>
            <person name="Horaitis O."/>
            <person name="Indge K.J."/>
            <person name="Jacquier A."/>
            <person name="James C.M."/>
            <person name="Jauniaux J.-C."/>
            <person name="Jimenez A."/>
            <person name="Keuchel H."/>
            <person name="Kirchrath L."/>
            <person name="Kleine K."/>
            <person name="Koetter P."/>
            <person name="Legrain P."/>
            <person name="Liebl S."/>
            <person name="Louis E.J."/>
            <person name="Maia e Silva A."/>
            <person name="Marck C."/>
            <person name="Monnier A.-L."/>
            <person name="Moestl D."/>
            <person name="Mueller S."/>
            <person name="Obermaier B."/>
            <person name="Oliver S.G."/>
            <person name="Pallier C."/>
            <person name="Pascolo S."/>
            <person name="Pfeiffer F."/>
            <person name="Philippsen P."/>
            <person name="Planta R.J."/>
            <person name="Pohl F.M."/>
            <person name="Pohl T.M."/>
            <person name="Poehlmann R."/>
            <person name="Portetelle D."/>
            <person name="Purnelle B."/>
            <person name="Puzos V."/>
            <person name="Ramezani Rad M."/>
            <person name="Rasmussen S.W."/>
            <person name="Remacha M.A."/>
            <person name="Revuelta J.L."/>
            <person name="Richard G.-F."/>
            <person name="Rieger M."/>
            <person name="Rodrigues-Pousada C."/>
            <person name="Rose M."/>
            <person name="Rupp T."/>
            <person name="Santos M.A."/>
            <person name="Schwager C."/>
            <person name="Sensen C."/>
            <person name="Skala J."/>
            <person name="Soares H."/>
            <person name="Sor F."/>
            <person name="Stegemann J."/>
            <person name="Tettelin H."/>
            <person name="Thierry A."/>
            <person name="Tzermia M."/>
            <person name="Urrestarazu L.A."/>
            <person name="van Dyck L."/>
            <person name="van Vliet-Reedijk J.C."/>
            <person name="Valens M."/>
            <person name="Vandenbol M."/>
            <person name="Vilela C."/>
            <person name="Vissers S."/>
            <person name="von Wettstein D."/>
            <person name="Voss H."/>
            <person name="Wiemann S."/>
            <person name="Xu G."/>
            <person name="Zimmermann J."/>
            <person name="Haasemann M."/>
            <person name="Becker I."/>
            <person name="Mewes H.-W."/>
        </authorList>
    </citation>
    <scope>NUCLEOTIDE SEQUENCE [LARGE SCALE GENOMIC DNA]</scope>
    <source>
        <strain>ATCC 204508 / S288c</strain>
    </source>
</reference>
<reference key="3">
    <citation type="journal article" date="2014" name="G3 (Bethesda)">
        <title>The reference genome sequence of Saccharomyces cerevisiae: Then and now.</title>
        <authorList>
            <person name="Engel S.R."/>
            <person name="Dietrich F.S."/>
            <person name="Fisk D.G."/>
            <person name="Binkley G."/>
            <person name="Balakrishnan R."/>
            <person name="Costanzo M.C."/>
            <person name="Dwight S.S."/>
            <person name="Hitz B.C."/>
            <person name="Karra K."/>
            <person name="Nash R.S."/>
            <person name="Weng S."/>
            <person name="Wong E.D."/>
            <person name="Lloyd P."/>
            <person name="Skrzypek M.S."/>
            <person name="Miyasato S.R."/>
            <person name="Simison M."/>
            <person name="Cherry J.M."/>
        </authorList>
    </citation>
    <scope>GENOME REANNOTATION</scope>
    <source>
        <strain>ATCC 204508 / S288c</strain>
    </source>
</reference>
<reference key="4">
    <citation type="journal article" date="1993" name="Mol. Gen. Genet.">
        <title>A pair of putative protein kinase genes (YPK1 and YPK2) is required for cell growth in Saccharomyces cerevisiae.</title>
        <authorList>
            <person name="Chen P.C."/>
            <person name="Lee K.S."/>
            <person name="Levin D.E."/>
        </authorList>
    </citation>
    <scope>DISCUSSION OF SEQUENCE</scope>
    <scope>FUNCTION</scope>
</reference>
<reference key="5">
    <citation type="journal article" date="1999" name="Curr. Biol.">
        <title>Functional counterparts of mammalian protein kinases PDK1 and SGK in budding yeast.</title>
        <authorList>
            <person name="Casamayor A."/>
            <person name="Torrance P.D."/>
            <person name="Kobayashi T."/>
            <person name="Thorner J."/>
            <person name="Alessi D.R."/>
        </authorList>
    </citation>
    <scope>PHOSPHORYLATION AT THR-504 BY PKH1</scope>
</reference>
<reference key="6">
    <citation type="journal article" date="2000" name="Mol. Cell. Biol.">
        <title>Sli2 (Ypk1), a homologue of mammalian protein kinase SGK, is a downstream kinase in the sphingolipid-mediated signaling pathway of yeast.</title>
        <authorList>
            <person name="Sun Y."/>
            <person name="Taniguchi R."/>
            <person name="Tanoue D."/>
            <person name="Yamaji T."/>
            <person name="Takematsu H."/>
            <person name="Mori K."/>
            <person name="Fujita T."/>
            <person name="Kawasaki T."/>
            <person name="Kozutsumi Y."/>
        </authorList>
    </citation>
    <scope>FUNCTION</scope>
    <scope>SUBCELLULAR LOCATION</scope>
    <scope>MUTAGENESIS OF LYS-376</scope>
</reference>
<reference key="7">
    <citation type="journal article" date="2002" name="J. Cell Biol.">
        <title>The conserved Pkh-Ypk kinase cascade is required for endocytosis in yeast.</title>
        <authorList>
            <person name="deHart A.K.A."/>
            <person name="Schnell J.D."/>
            <person name="Allen D.A."/>
            <person name="Hicke L."/>
        </authorList>
    </citation>
    <scope>INVOLVEMENT IN ENDOCYTOSIS</scope>
    <scope>MUTAGENESIS OF LYS-376; ASP-488; GLY-490; THR-504 AND THR-662</scope>
</reference>
<reference key="8">
    <citation type="journal article" date="2002" name="Mol. Biol. Cell">
        <title>Pkh1 and Pkh2 differentially phosphorylate and activate Ypk1 and Ykr2 and define protein kinase modules required for maintenance of cell wall integrity.</title>
        <authorList>
            <person name="Roelants F.M."/>
            <person name="Torrance P.D."/>
            <person name="Bezman N."/>
            <person name="Thorner J."/>
        </authorList>
    </citation>
    <scope>FUNCTION</scope>
    <scope>SUBCELLULAR LOCATION</scope>
    <scope>ACTIVATION BY PKH1</scope>
    <scope>MUTAGENESIS OF LYS-376</scope>
</reference>
<reference key="9">
    <citation type="journal article" date="2003" name="Nature">
        <title>Global analysis of protein localization in budding yeast.</title>
        <authorList>
            <person name="Huh W.-K."/>
            <person name="Falvo J.V."/>
            <person name="Gerke L.C."/>
            <person name="Carroll A.S."/>
            <person name="Howson R.W."/>
            <person name="Weissman J.S."/>
            <person name="O'Shea E.K."/>
        </authorList>
    </citation>
    <scope>SUBCELLULAR LOCATION [LARGE SCALE ANALYSIS]</scope>
</reference>
<reference key="10">
    <citation type="journal article" date="2003" name="Nature">
        <title>Global analysis of protein expression in yeast.</title>
        <authorList>
            <person name="Ghaemmaghami S."/>
            <person name="Huh W.-K."/>
            <person name="Bower K."/>
            <person name="Howson R.W."/>
            <person name="Belle A."/>
            <person name="Dephoure N."/>
            <person name="O'Shea E.K."/>
            <person name="Weissman J.S."/>
        </authorList>
    </citation>
    <scope>LEVEL OF PROTEIN EXPRESSION [LARGE SCALE ANALYSIS]</scope>
</reference>
<reference key="11">
    <citation type="journal article" date="2004" name="Biochem. J.">
        <title>SLI1 (YGR212W) is a major gene conferring resistance to the sphingolipid biosynthesis inhibitor ISP-1, and encodes an ISP-1 N-acetyltransferase in yeast.</title>
        <authorList>
            <person name="Momoi M."/>
            <person name="Tanoue D."/>
            <person name="Sun Y."/>
            <person name="Takematsu H."/>
            <person name="Suzuki Y."/>
            <person name="Suzuki M."/>
            <person name="Suzuki A."/>
            <person name="Fujita T."/>
            <person name="Kozutsumi Y."/>
        </authorList>
    </citation>
    <scope>INVOLVEMENT IN MYRIOCIN RESISTANCE</scope>
</reference>
<reference key="12">
    <citation type="journal article" date="2004" name="Microbiology">
        <title>Differential roles of PDK1- and PDK2-phosphorylation sites in the yeast AGC kinases Ypk1, Pkc1 and Sch9.</title>
        <authorList>
            <person name="Roelants F.M."/>
            <person name="Torrance P.D."/>
            <person name="Thorner J."/>
        </authorList>
    </citation>
    <scope>FUNCTION</scope>
    <scope>PHOSPHORYLATION</scope>
    <scope>MUTAGENESIS OF LYS-376; ASP-488; THR-504 AND THR-662</scope>
</reference>
<reference key="13">
    <citation type="journal article" date="2005" name="Arch. Biochem. Biophys.">
        <title>The requirement for the hydrophobic motif phosphorylation of Ypk1 in yeast differs depending on the downstream events, including endocytosis, cell growth, and resistance to a sphingolipid biosynthesis inhibitor, ISP-1.</title>
        <authorList>
            <person name="Tanoue D."/>
            <person name="Kobayashi T."/>
            <person name="Sun Y."/>
            <person name="Fujita T."/>
            <person name="Takematsu H."/>
            <person name="Kozutsumi Y."/>
        </authorList>
    </citation>
    <scope>MUTAGENESIS OF LYS-376; GLY-490; THR-504 AND THR-662</scope>
</reference>
<reference key="14">
    <citation type="journal article" date="2005" name="J. Biol. Chem.">
        <title>The sphingoid long chain base phytosphingosine activates AGC-type protein kinases in Saccharomyces cerevisiae including Ypk1, Ypk2, and Sch9.</title>
        <authorList>
            <person name="Liu K."/>
            <person name="Zhang X."/>
            <person name="Lester R.L."/>
            <person name="Dickson R.C."/>
        </authorList>
    </citation>
    <scope>ACTIVITY REGULATION</scope>
    <scope>AUTOPHOSPHORYLATION</scope>
    <scope>PHOSPHORYLATION AT THR-504 AND THR-662 BY PKH1</scope>
    <scope>MUTAGENESIS OF LYS-376; THR-504 AND THR-662</scope>
</reference>
<reference key="15">
    <citation type="journal article" date="2007" name="J. Proteome Res.">
        <title>Large-scale phosphorylation analysis of alpha-factor-arrested Saccharomyces cerevisiae.</title>
        <authorList>
            <person name="Li X."/>
            <person name="Gerber S.A."/>
            <person name="Rudner A.D."/>
            <person name="Beausoleil S.A."/>
            <person name="Haas W."/>
            <person name="Villen J."/>
            <person name="Elias J.E."/>
            <person name="Gygi S.P."/>
        </authorList>
    </citation>
    <scope>PHOSPHORYLATION [LARGE SCALE ANALYSIS] AT THR-57; SER-644 AND SER-653</scope>
    <scope>IDENTIFICATION BY MASS SPECTROMETRY [LARGE SCALE ANALYSIS]</scope>
    <source>
        <strain>ADR376</strain>
    </source>
</reference>
<reference key="16">
    <citation type="journal article" date="2007" name="Proc. Natl. Acad. Sci. U.S.A.">
        <title>Analysis of phosphorylation sites on proteins from Saccharomyces cerevisiae by electron transfer dissociation (ETD) mass spectrometry.</title>
        <authorList>
            <person name="Chi A."/>
            <person name="Huttenhower C."/>
            <person name="Geer L.Y."/>
            <person name="Coon J.J."/>
            <person name="Syka J.E.P."/>
            <person name="Bai D.L."/>
            <person name="Shabanowitz J."/>
            <person name="Burke D.J."/>
            <person name="Troyanskaya O.G."/>
            <person name="Hunt D.F."/>
        </authorList>
    </citation>
    <scope>IDENTIFICATION BY MASS SPECTROMETRY [LARGE SCALE ANALYSIS]</scope>
</reference>
<reference key="17">
    <citation type="journal article" date="2008" name="Mol. Cell. Proteomics">
        <title>A multidimensional chromatography technology for in-depth phosphoproteome analysis.</title>
        <authorList>
            <person name="Albuquerque C.P."/>
            <person name="Smolka M.B."/>
            <person name="Payne S.H."/>
            <person name="Bafna V."/>
            <person name="Eng J."/>
            <person name="Zhou H."/>
        </authorList>
    </citation>
    <scope>PHOSPHORYLATION [LARGE SCALE ANALYSIS] AT SER-170 AND SER-653</scope>
    <scope>IDENTIFICATION BY MASS SPECTROMETRY [LARGE SCALE ANALYSIS]</scope>
</reference>
<reference key="18">
    <citation type="journal article" date="2009" name="Science">
        <title>Global analysis of Cdk1 substrate phosphorylation sites provides insights into evolution.</title>
        <authorList>
            <person name="Holt L.J."/>
            <person name="Tuch B.B."/>
            <person name="Villen J."/>
            <person name="Johnson A.D."/>
            <person name="Gygi S.P."/>
            <person name="Morgan D.O."/>
        </authorList>
    </citation>
    <scope>PHOSPHORYLATION [LARGE SCALE ANALYSIS] AT THR-57; SER-61; SER-64; SER-71; SER-170; THR-502; THR-504; SER-644; SER-653 AND SER-671</scope>
    <scope>IDENTIFICATION BY MASS SPECTROMETRY [LARGE SCALE ANALYSIS]</scope>
</reference>
<reference key="19">
    <citation type="journal article" date="2010" name="Proc. Natl. Acad. Sci. U.S.A.">
        <title>A protein kinase network regulates the function of aminophospholipid flippases.</title>
        <authorList>
            <person name="Roelants F.M."/>
            <person name="Baltz A.G."/>
            <person name="Trott A.E."/>
            <person name="Fereres S."/>
            <person name="Thorner J."/>
        </authorList>
    </citation>
    <scope>FUNCTION</scope>
    <scope>PHOSPHORYLATION BY FPK1</scope>
</reference>
<reference evidence="18" key="20">
    <citation type="journal article" date="2022" name="FEBS J.">
        <title>Regulation of sphingolipid biosynthesis in the endoplasmic reticulum via signals from the plasma membrane in budding yeast.</title>
        <authorList>
            <person name="Ishino Y."/>
            <person name="Komatsu N."/>
            <person name="Sakata K.T."/>
            <person name="Yoshikawa D."/>
            <person name="Tani M."/>
            <person name="Maeda T."/>
            <person name="Morishige K."/>
            <person name="Yoshizawa K."/>
            <person name="Tanaka N."/>
            <person name="Tabuchi M."/>
        </authorList>
    </citation>
    <scope>FUNCTION</scope>
    <scope>PHOSPHORYLATION AT THR-662</scope>
</reference>
<reference evidence="18" key="21">
    <citation type="journal article" date="2024" name="J. Lipid Res.">
        <title>Orm proteins control ceramide synthesis and endocytosis via LCB-mediated Ypk1 regulation.</title>
        <authorList>
            <person name="Ren J."/>
            <person name="Rieger R."/>
            <person name="Pereira de Sa N."/>
            <person name="Kelapire D."/>
            <person name="Del Poeta M."/>
            <person name="Hannun Y.A."/>
        </authorList>
    </citation>
    <scope>FUNCTION</scope>
    <scope>PHOSPHORYLATION AT THR-504 AND THR-662</scope>
    <scope>MUTAGENESIS OF ASP-242</scope>
</reference>